<comment type="function">
    <text evidence="1 3">Dermonecrotic toxins cleave the phosphodiester linkage between the phosphate and headgroup of certain phospholipids (sphingolipid and lysolipid substrates), forming an alcohol (often choline) and a cyclic phosphate (By similarity). This toxin acts on sphingomyelin (SM) (By similarity). It may also act on ceramide phosphoethanolamine (CPE), lysophosphatidylcholine (LPC) and lysophosphatidylethanolamine (LPE), but not on lysophosphatidylserine (LPS), and lysophosphatidylglycerol (LPG) (By similarity). It acts by transphosphatidylation, releasing exclusively cyclic phosphate products as second products (By similarity). Induces dermonecrosis, hemolysis, increased vascular permeability, edema, inflammatory response, and platelet aggregation (By similarity).</text>
</comment>
<comment type="catalytic activity">
    <reaction evidence="1">
        <text>an N-(acyl)-sphingosylphosphocholine = an N-(acyl)-sphingosyl-1,3-cyclic phosphate + choline</text>
        <dbReference type="Rhea" id="RHEA:60652"/>
        <dbReference type="ChEBI" id="CHEBI:15354"/>
        <dbReference type="ChEBI" id="CHEBI:64583"/>
        <dbReference type="ChEBI" id="CHEBI:143892"/>
    </reaction>
</comment>
<comment type="catalytic activity">
    <reaction evidence="1">
        <text>an N-(acyl)-sphingosylphosphoethanolamine = an N-(acyl)-sphingosyl-1,3-cyclic phosphate + ethanolamine</text>
        <dbReference type="Rhea" id="RHEA:60648"/>
        <dbReference type="ChEBI" id="CHEBI:57603"/>
        <dbReference type="ChEBI" id="CHEBI:143891"/>
        <dbReference type="ChEBI" id="CHEBI:143892"/>
    </reaction>
</comment>
<comment type="catalytic activity">
    <reaction evidence="1">
        <text>a 1-acyl-sn-glycero-3-phosphocholine = a 1-acyl-sn-glycero-2,3-cyclic phosphate + choline</text>
        <dbReference type="Rhea" id="RHEA:60700"/>
        <dbReference type="ChEBI" id="CHEBI:15354"/>
        <dbReference type="ChEBI" id="CHEBI:58168"/>
        <dbReference type="ChEBI" id="CHEBI:143947"/>
    </reaction>
</comment>
<comment type="catalytic activity">
    <reaction evidence="1">
        <text>a 1-acyl-sn-glycero-3-phosphoethanolamine = a 1-acyl-sn-glycero-2,3-cyclic phosphate + ethanolamine</text>
        <dbReference type="Rhea" id="RHEA:60704"/>
        <dbReference type="ChEBI" id="CHEBI:57603"/>
        <dbReference type="ChEBI" id="CHEBI:64381"/>
        <dbReference type="ChEBI" id="CHEBI:143947"/>
    </reaction>
</comment>
<comment type="cofactor">
    <cofactor evidence="5">
        <name>Mg(2+)</name>
        <dbReference type="ChEBI" id="CHEBI:18420"/>
    </cofactor>
    <text evidence="5">Binds 1 Mg(2+) ion per subunit.</text>
</comment>
<comment type="subcellular location">
    <subcellularLocation>
        <location evidence="8">Secreted</location>
    </subcellularLocation>
</comment>
<comment type="tissue specificity">
    <text evidence="8">Expressed by the venom gland.</text>
</comment>
<comment type="similarity">
    <text evidence="7">Belongs to the arthropod phospholipase D family. Class II subfamily.</text>
</comment>
<comment type="caution">
    <text evidence="1 2 4">The most common activity assay for dermonecrotic toxins detects enzymatic activity by monitoring choline release from substrate. Liberation of choline from sphingomyelin (SM) or lysophosphatidylcholine (LPC) is commonly assumed to result from substrate hydrolysis, giving either ceramide-1-phosphate (C1P) or lysophosphatidic acid (LPA), respectively, as a second product. However, two studies from Lajoie and colleagues (2013 and 2015) report the observation of exclusive formation of cyclic phosphate products as second products, resulting from intramolecular transphosphatidylation. Cyclic phosphates have vastly different biological properties from their monoester counterparts, and they may be relevant to the pathology of brown spider envenomation.</text>
</comment>
<organism>
    <name type="scientific">Loxosceles hirsuta</name>
    <name type="common">Recluse spider</name>
    <dbReference type="NCBI Taxonomy" id="571525"/>
    <lineage>
        <taxon>Eukaryota</taxon>
        <taxon>Metazoa</taxon>
        <taxon>Ecdysozoa</taxon>
        <taxon>Arthropoda</taxon>
        <taxon>Chelicerata</taxon>
        <taxon>Arachnida</taxon>
        <taxon>Araneae</taxon>
        <taxon>Araneomorphae</taxon>
        <taxon>Haplogynae</taxon>
        <taxon>Scytodoidea</taxon>
        <taxon>Sicariidae</taxon>
        <taxon>Loxosceles</taxon>
    </lineage>
</organism>
<keyword id="KW-0204">Cytolysis</keyword>
<keyword id="KW-1061">Dermonecrotic toxin</keyword>
<keyword id="KW-1015">Disulfide bond</keyword>
<keyword id="KW-0354">Hemolysis</keyword>
<keyword id="KW-0442">Lipid degradation</keyword>
<keyword id="KW-0443">Lipid metabolism</keyword>
<keyword id="KW-0456">Lyase</keyword>
<keyword id="KW-0460">Magnesium</keyword>
<keyword id="KW-0479">Metal-binding</keyword>
<keyword id="KW-0964">Secreted</keyword>
<keyword id="KW-0800">Toxin</keyword>
<proteinExistence type="evidence at transcript level"/>
<evidence type="ECO:0000250" key="1">
    <source>
        <dbReference type="UniProtKB" id="A0A0D4WTV1"/>
    </source>
</evidence>
<evidence type="ECO:0000250" key="2">
    <source>
        <dbReference type="UniProtKB" id="A0A0D4WV12"/>
    </source>
</evidence>
<evidence type="ECO:0000250" key="3">
    <source>
        <dbReference type="UniProtKB" id="P0CE80"/>
    </source>
</evidence>
<evidence type="ECO:0000250" key="4">
    <source>
        <dbReference type="UniProtKB" id="Q4ZFU2"/>
    </source>
</evidence>
<evidence type="ECO:0000250" key="5">
    <source>
        <dbReference type="UniProtKB" id="Q8I914"/>
    </source>
</evidence>
<evidence type="ECO:0000303" key="6">
    <source>
    </source>
</evidence>
<evidence type="ECO:0000305" key="7"/>
<evidence type="ECO:0000305" key="8">
    <source>
    </source>
</evidence>
<name>A1IA8_LOXHI</name>
<sequence>WIMGHMVNAVYQIDEFVNLGANSIETDVSFDDNANPEYTYHGIPCDCGRSCLKWENCNDFLKGLRSATTPGNSKYQSKLILVVFDLKTGSLYDNQASEAGKKLAKNLLKHYWNNGNNGGRAYIVLSIPDLNHYPLIKGFTDTLKQEGHPELLEKVGYDFSGNDAVGDVAKAYKKAGVSGHVWQSDGITNCLLRGLTRVKEAVANRDSGNGYINKVYYWTVDKRATTRDALDAGVDGVMTNYPDVIADVMNEAAYKNKVRLATYEDSPWVTFKK</sequence>
<dbReference type="EC" id="4.6.1.-" evidence="4"/>
<dbReference type="EMBL" id="FJ171353">
    <property type="protein sequence ID" value="ACN48849.1"/>
    <property type="molecule type" value="mRNA"/>
</dbReference>
<dbReference type="SMR" id="C0JAR8"/>
<dbReference type="GO" id="GO:0005576">
    <property type="term" value="C:extracellular region"/>
    <property type="evidence" value="ECO:0007669"/>
    <property type="project" value="UniProtKB-SubCell"/>
</dbReference>
<dbReference type="GO" id="GO:0016829">
    <property type="term" value="F:lyase activity"/>
    <property type="evidence" value="ECO:0007669"/>
    <property type="project" value="UniProtKB-KW"/>
</dbReference>
<dbReference type="GO" id="GO:0046872">
    <property type="term" value="F:metal ion binding"/>
    <property type="evidence" value="ECO:0007669"/>
    <property type="project" value="UniProtKB-KW"/>
</dbReference>
<dbReference type="GO" id="GO:0008081">
    <property type="term" value="F:phosphoric diester hydrolase activity"/>
    <property type="evidence" value="ECO:0007669"/>
    <property type="project" value="InterPro"/>
</dbReference>
<dbReference type="GO" id="GO:0090729">
    <property type="term" value="F:toxin activity"/>
    <property type="evidence" value="ECO:0007669"/>
    <property type="project" value="UniProtKB-KW"/>
</dbReference>
<dbReference type="GO" id="GO:0031640">
    <property type="term" value="P:killing of cells of another organism"/>
    <property type="evidence" value="ECO:0007669"/>
    <property type="project" value="UniProtKB-KW"/>
</dbReference>
<dbReference type="GO" id="GO:0016042">
    <property type="term" value="P:lipid catabolic process"/>
    <property type="evidence" value="ECO:0007669"/>
    <property type="project" value="UniProtKB-KW"/>
</dbReference>
<dbReference type="CDD" id="cd08576">
    <property type="entry name" value="GDPD_like_SMaseD_PLD"/>
    <property type="match status" value="1"/>
</dbReference>
<dbReference type="Gene3D" id="3.20.20.190">
    <property type="entry name" value="Phosphatidylinositol (PI) phosphodiesterase"/>
    <property type="match status" value="1"/>
</dbReference>
<dbReference type="InterPro" id="IPR017946">
    <property type="entry name" value="PLC-like_Pdiesterase_TIM-brl"/>
</dbReference>
<dbReference type="Pfam" id="PF13653">
    <property type="entry name" value="GDPD_2"/>
    <property type="match status" value="1"/>
</dbReference>
<dbReference type="SUPFAM" id="SSF51695">
    <property type="entry name" value="PLC-like phosphodiesterases"/>
    <property type="match status" value="1"/>
</dbReference>
<accession>C0JAR8</accession>
<feature type="chain" id="PRO_0000392756" description="Dermonecrotic toxin LhSicTox-alphaIA2aviii">
    <location>
        <begin position="1" status="less than"/>
        <end position="273"/>
    </location>
</feature>
<feature type="active site" evidence="5">
    <location>
        <position position="5"/>
    </location>
</feature>
<feature type="active site" description="Nucleophile" evidence="5">
    <location>
        <position position="41"/>
    </location>
</feature>
<feature type="binding site" evidence="5">
    <location>
        <position position="25"/>
    </location>
    <ligand>
        <name>Mg(2+)</name>
        <dbReference type="ChEBI" id="CHEBI:18420"/>
    </ligand>
</feature>
<feature type="binding site" evidence="5">
    <location>
        <position position="27"/>
    </location>
    <ligand>
        <name>Mg(2+)</name>
        <dbReference type="ChEBI" id="CHEBI:18420"/>
    </ligand>
</feature>
<feature type="binding site" evidence="5">
    <location>
        <position position="85"/>
    </location>
    <ligand>
        <name>Mg(2+)</name>
        <dbReference type="ChEBI" id="CHEBI:18420"/>
    </ligand>
</feature>
<feature type="disulfide bond" evidence="3">
    <location>
        <begin position="45"/>
        <end position="51"/>
    </location>
</feature>
<feature type="disulfide bond" evidence="3">
    <location>
        <begin position="47"/>
        <end position="190"/>
    </location>
</feature>
<feature type="non-terminal residue">
    <location>
        <position position="1"/>
    </location>
</feature>
<reference key="1">
    <citation type="journal article" date="2009" name="Mol. Biol. Evol.">
        <title>Molecular evolution, functional variation, and proposed nomenclature of the gene family that includes sphingomyelinase D in sicariid spider venoms.</title>
        <authorList>
            <person name="Binford G.J."/>
            <person name="Bodner M.R."/>
            <person name="Cordes M.H."/>
            <person name="Baldwin K.L."/>
            <person name="Rynerson M.R."/>
            <person name="Burns S.N."/>
            <person name="Zobel-Thropp P.A."/>
        </authorList>
    </citation>
    <scope>NUCLEOTIDE SEQUENCE [MRNA]</scope>
    <scope>NOMENCLATURE</scope>
    <source>
        <tissue>Venom gland</tissue>
    </source>
</reference>
<protein>
    <recommendedName>
        <fullName evidence="6">Dermonecrotic toxin LhSicTox-alphaIA2aviii</fullName>
        <ecNumber evidence="4">4.6.1.-</ecNumber>
    </recommendedName>
    <alternativeName>
        <fullName>Phospholipase D</fullName>
        <shortName>PLD</shortName>
    </alternativeName>
    <alternativeName>
        <fullName>Sphingomyelin phosphodiesterase D</fullName>
        <shortName>SMD</shortName>
        <shortName>SMase D</shortName>
        <shortName>Sphingomyelinase D</shortName>
    </alternativeName>
</protein>